<accession>Q61330</accession>
<accession>Q6NZJ4</accession>
<accession>Q7TSJ5</accession>
<name>CNTN2_MOUSE</name>
<feature type="signal peptide" evidence="1">
    <location>
        <begin position="1"/>
        <end position="30"/>
    </location>
</feature>
<feature type="chain" id="PRO_0000014697" description="Contactin-2">
    <location>
        <begin position="31"/>
        <end position="1014"/>
    </location>
</feature>
<feature type="propeptide" id="PRO_0000014698" description="Removed in mature form" evidence="2">
    <location>
        <begin position="1015"/>
        <end position="1040"/>
    </location>
</feature>
<feature type="domain" description="Ig-like C2-type 1">
    <location>
        <begin position="39"/>
        <end position="130"/>
    </location>
</feature>
<feature type="domain" description="Ig-like C2-type 2">
    <location>
        <begin position="135"/>
        <end position="224"/>
    </location>
</feature>
<feature type="domain" description="Ig-like C2-type 3">
    <location>
        <begin position="241"/>
        <end position="324"/>
    </location>
</feature>
<feature type="domain" description="Ig-like C2-type 4">
    <location>
        <begin position="329"/>
        <end position="413"/>
    </location>
</feature>
<feature type="domain" description="Ig-like C2-type 5">
    <location>
        <begin position="419"/>
        <end position="506"/>
    </location>
</feature>
<feature type="domain" description="Ig-like C2-type 6">
    <location>
        <begin position="511"/>
        <end position="605"/>
    </location>
</feature>
<feature type="domain" description="Fibronectin type-III 1" evidence="4">
    <location>
        <begin position="612"/>
        <end position="710"/>
    </location>
</feature>
<feature type="domain" description="Fibronectin type-III 2" evidence="4">
    <location>
        <begin position="715"/>
        <end position="812"/>
    </location>
</feature>
<feature type="domain" description="Fibronectin type-III 3" evidence="4">
    <location>
        <begin position="817"/>
        <end position="913"/>
    </location>
</feature>
<feature type="domain" description="Fibronectin type-III 4" evidence="4">
    <location>
        <begin position="917"/>
        <end position="1008"/>
    </location>
</feature>
<feature type="region of interest" description="Disordered" evidence="5">
    <location>
        <begin position="897"/>
        <end position="922"/>
    </location>
</feature>
<feature type="short sequence motif" description="Cell attachment site" evidence="2">
    <location>
        <begin position="796"/>
        <end position="798"/>
    </location>
</feature>
<feature type="lipid moiety-binding region" description="GPI-anchor amidated serine" evidence="2">
    <location>
        <position position="1014"/>
    </location>
</feature>
<feature type="glycosylation site" description="N-linked (GlcNAc...) asparagine" evidence="2">
    <location>
        <position position="78"/>
    </location>
</feature>
<feature type="glycosylation site" description="N-linked (GlcNAc...) asparagine" evidence="2">
    <location>
        <position position="200"/>
    </location>
</feature>
<feature type="glycosylation site" description="N-linked (GlcNAc...) asparagine" evidence="2">
    <location>
        <position position="206"/>
    </location>
</feature>
<feature type="glycosylation site" description="N-linked (GlcNAc...) asparagine" evidence="2">
    <location>
        <position position="463"/>
    </location>
</feature>
<feature type="glycosylation site" description="N-linked (GlcNAc...) asparagine" evidence="2">
    <location>
        <position position="479"/>
    </location>
</feature>
<feature type="glycosylation site" description="N-linked (GlcNAc...) asparagine" evidence="2">
    <location>
        <position position="500"/>
    </location>
</feature>
<feature type="glycosylation site" description="N-linked (GlcNAc...) asparagine" evidence="2">
    <location>
        <position position="527"/>
    </location>
</feature>
<feature type="glycosylation site" description="N-linked (GlcNAc...) asparagine" evidence="2">
    <location>
        <position position="777"/>
    </location>
</feature>
<feature type="glycosylation site" description="N-linked (GlcNAc...) asparagine" evidence="2">
    <location>
        <position position="832"/>
    </location>
</feature>
<feature type="glycosylation site" description="N-linked (GlcNAc...) asparagine" evidence="2">
    <location>
        <position position="920"/>
    </location>
</feature>
<feature type="glycosylation site" description="N-linked (GlcNAc...) asparagine" evidence="2">
    <location>
        <position position="942"/>
    </location>
</feature>
<feature type="disulfide bond" evidence="3">
    <location>
        <begin position="63"/>
        <end position="113"/>
    </location>
</feature>
<feature type="disulfide bond" evidence="3">
    <location>
        <begin position="157"/>
        <end position="209"/>
    </location>
</feature>
<feature type="disulfide bond" evidence="3">
    <location>
        <begin position="263"/>
        <end position="308"/>
    </location>
</feature>
<feature type="disulfide bond" evidence="3">
    <location>
        <begin position="350"/>
        <end position="397"/>
    </location>
</feature>
<feature type="sequence conflict" description="In Ref. 2; CAA57130." evidence="6" ref="2">
    <original>I</original>
    <variation>M</variation>
    <location>
        <position position="665"/>
    </location>
</feature>
<feature type="sequence conflict" description="In Ref. 2; CAA57130." evidence="6" ref="2">
    <original>A</original>
    <variation>R</variation>
    <location>
        <position position="861"/>
    </location>
</feature>
<feature type="sequence conflict" description="In Ref. 2; CAA57130." evidence="6" ref="2">
    <original>Y</original>
    <variation>N</variation>
    <location>
        <position position="881"/>
    </location>
</feature>
<feature type="strand" evidence="8">
    <location>
        <begin position="40"/>
        <end position="43"/>
    </location>
</feature>
<feature type="strand" evidence="8">
    <location>
        <begin position="48"/>
        <end position="50"/>
    </location>
</feature>
<feature type="strand" evidence="8">
    <location>
        <begin position="55"/>
        <end position="61"/>
    </location>
</feature>
<feature type="strand" evidence="8">
    <location>
        <begin position="64"/>
        <end position="66"/>
    </location>
</feature>
<feature type="strand" evidence="8">
    <location>
        <begin position="72"/>
        <end position="77"/>
    </location>
</feature>
<feature type="strand" evidence="8">
    <location>
        <begin position="86"/>
        <end position="93"/>
    </location>
</feature>
<feature type="strand" evidence="8">
    <location>
        <begin position="96"/>
        <end position="101"/>
    </location>
</feature>
<feature type="helix" evidence="8">
    <location>
        <begin position="104"/>
        <end position="107"/>
    </location>
</feature>
<feature type="strand" evidence="8">
    <location>
        <begin position="109"/>
        <end position="116"/>
    </location>
</feature>
<feature type="strand" evidence="8">
    <location>
        <begin position="121"/>
        <end position="131"/>
    </location>
</feature>
<feature type="strand" evidence="8">
    <location>
        <begin position="145"/>
        <end position="149"/>
    </location>
</feature>
<feature type="strand" evidence="8">
    <location>
        <begin position="153"/>
        <end position="155"/>
    </location>
</feature>
<feature type="strand" evidence="8">
    <location>
        <begin position="161"/>
        <end position="164"/>
    </location>
</feature>
<feature type="strand" evidence="8">
    <location>
        <begin position="167"/>
        <end position="176"/>
    </location>
</feature>
<feature type="strand" evidence="8">
    <location>
        <begin position="182"/>
        <end position="187"/>
    </location>
</feature>
<feature type="turn" evidence="8">
    <location>
        <begin position="189"/>
        <end position="191"/>
    </location>
</feature>
<feature type="strand" evidence="8">
    <location>
        <begin position="194"/>
        <end position="198"/>
    </location>
</feature>
<feature type="helix" evidence="8">
    <location>
        <begin position="201"/>
        <end position="203"/>
    </location>
</feature>
<feature type="strand" evidence="8">
    <location>
        <begin position="205"/>
        <end position="212"/>
    </location>
</feature>
<feature type="strand" evidence="8">
    <location>
        <begin position="221"/>
        <end position="223"/>
    </location>
</feature>
<feature type="strand" evidence="8">
    <location>
        <begin position="227"/>
        <end position="234"/>
    </location>
</feature>
<feature type="strand" evidence="8">
    <location>
        <begin position="242"/>
        <end position="245"/>
    </location>
</feature>
<feature type="strand" evidence="8">
    <location>
        <begin position="249"/>
        <end position="254"/>
    </location>
</feature>
<feature type="strand" evidence="8">
    <location>
        <begin position="259"/>
        <end position="262"/>
    </location>
</feature>
<feature type="strand" evidence="8">
    <location>
        <begin position="264"/>
        <end position="266"/>
    </location>
</feature>
<feature type="strand" evidence="8">
    <location>
        <begin position="272"/>
        <end position="277"/>
    </location>
</feature>
<feature type="strand" evidence="8">
    <location>
        <begin position="284"/>
        <end position="286"/>
    </location>
</feature>
<feature type="strand" evidence="8">
    <location>
        <begin position="290"/>
        <end position="297"/>
    </location>
</feature>
<feature type="helix" evidence="8">
    <location>
        <begin position="300"/>
        <end position="302"/>
    </location>
</feature>
<feature type="strand" evidence="8">
    <location>
        <begin position="304"/>
        <end position="312"/>
    </location>
</feature>
<feature type="strand" evidence="8">
    <location>
        <begin position="315"/>
        <end position="326"/>
    </location>
</feature>
<feature type="strand" evidence="8">
    <location>
        <begin position="330"/>
        <end position="333"/>
    </location>
</feature>
<feature type="strand" evidence="8">
    <location>
        <begin position="338"/>
        <end position="341"/>
    </location>
</feature>
<feature type="strand" evidence="8">
    <location>
        <begin position="345"/>
        <end position="349"/>
    </location>
</feature>
<feature type="strand" evidence="8">
    <location>
        <begin position="351"/>
        <end position="353"/>
    </location>
</feature>
<feature type="strand" evidence="8">
    <location>
        <begin position="359"/>
        <end position="368"/>
    </location>
</feature>
<feature type="strand" evidence="8">
    <location>
        <begin position="373"/>
        <end position="378"/>
    </location>
</feature>
<feature type="strand" evidence="8">
    <location>
        <begin position="381"/>
        <end position="386"/>
    </location>
</feature>
<feature type="helix" evidence="8">
    <location>
        <begin position="389"/>
        <end position="391"/>
    </location>
</feature>
<feature type="strand" evidence="8">
    <location>
        <begin position="393"/>
        <end position="401"/>
    </location>
</feature>
<feature type="strand" evidence="8">
    <location>
        <begin position="404"/>
        <end position="415"/>
    </location>
</feature>
<feature type="strand" evidence="8">
    <location>
        <begin position="422"/>
        <end position="424"/>
    </location>
</feature>
<feature type="strand" evidence="8">
    <location>
        <begin position="428"/>
        <end position="430"/>
    </location>
</feature>
<feature type="strand" evidence="8">
    <location>
        <begin position="438"/>
        <end position="440"/>
    </location>
</feature>
<feature type="strand" evidence="8">
    <location>
        <begin position="451"/>
        <end position="456"/>
    </location>
</feature>
<feature type="strand" evidence="8">
    <location>
        <begin position="459"/>
        <end position="461"/>
    </location>
</feature>
<feature type="strand" evidence="8">
    <location>
        <begin position="465"/>
        <end position="469"/>
    </location>
</feature>
<feature type="strand" evidence="8">
    <location>
        <begin position="471"/>
        <end position="473"/>
    </location>
</feature>
<feature type="strand" evidence="8">
    <location>
        <begin position="475"/>
        <end position="477"/>
    </location>
</feature>
<feature type="strand" evidence="8">
    <location>
        <begin position="486"/>
        <end position="493"/>
    </location>
</feature>
<feature type="strand" evidence="8">
    <location>
        <begin position="498"/>
        <end position="505"/>
    </location>
</feature>
<feature type="strand" evidence="8">
    <location>
        <begin position="512"/>
        <end position="515"/>
    </location>
</feature>
<feature type="strand" evidence="8">
    <location>
        <begin position="520"/>
        <end position="523"/>
    </location>
</feature>
<feature type="strand" evidence="8">
    <location>
        <begin position="528"/>
        <end position="535"/>
    </location>
</feature>
<feature type="strand" evidence="8">
    <location>
        <begin position="543"/>
        <end position="548"/>
    </location>
</feature>
<feature type="strand" evidence="8">
    <location>
        <begin position="562"/>
        <end position="564"/>
    </location>
</feature>
<feature type="strand" evidence="8">
    <location>
        <begin position="569"/>
        <end position="576"/>
    </location>
</feature>
<feature type="strand" evidence="8">
    <location>
        <begin position="585"/>
        <end position="592"/>
    </location>
</feature>
<feature type="strand" evidence="8">
    <location>
        <begin position="597"/>
        <end position="607"/>
    </location>
</feature>
<feature type="strand" evidence="7">
    <location>
        <begin position="614"/>
        <end position="620"/>
    </location>
</feature>
<feature type="strand" evidence="7">
    <location>
        <begin position="626"/>
        <end position="631"/>
    </location>
</feature>
<feature type="strand" evidence="7">
    <location>
        <begin position="642"/>
        <end position="648"/>
    </location>
</feature>
<feature type="turn" evidence="7">
    <location>
        <begin position="650"/>
        <end position="652"/>
    </location>
</feature>
<feature type="strand" evidence="7">
    <location>
        <begin position="659"/>
        <end position="666"/>
    </location>
</feature>
<feature type="strand" evidence="7">
    <location>
        <begin position="671"/>
        <end position="675"/>
    </location>
</feature>
<feature type="strand" evidence="7">
    <location>
        <begin position="682"/>
        <end position="691"/>
    </location>
</feature>
<feature type="strand" evidence="7">
    <location>
        <begin position="717"/>
        <end position="721"/>
    </location>
</feature>
<feature type="strand" evidence="7">
    <location>
        <begin position="728"/>
        <end position="734"/>
    </location>
</feature>
<feature type="helix" evidence="7">
    <location>
        <begin position="738"/>
        <end position="741"/>
    </location>
</feature>
<feature type="strand" evidence="7">
    <location>
        <begin position="743"/>
        <end position="745"/>
    </location>
</feature>
<feature type="strand" evidence="7">
    <location>
        <begin position="747"/>
        <end position="754"/>
    </location>
</feature>
<feature type="strand" evidence="7">
    <location>
        <begin position="761"/>
        <end position="766"/>
    </location>
</feature>
<feature type="strand" evidence="7">
    <location>
        <begin position="772"/>
        <end position="776"/>
    </location>
</feature>
<feature type="strand" evidence="7">
    <location>
        <begin position="785"/>
        <end position="794"/>
    </location>
</feature>
<feature type="strand" evidence="7">
    <location>
        <begin position="797"/>
        <end position="801"/>
    </location>
</feature>
<feature type="strand" evidence="7">
    <location>
        <begin position="805"/>
        <end position="808"/>
    </location>
</feature>
<feature type="strand" evidence="7">
    <location>
        <begin position="821"/>
        <end position="825"/>
    </location>
</feature>
<feature type="strand" evidence="7">
    <location>
        <begin position="827"/>
        <end position="829"/>
    </location>
</feature>
<feature type="strand" evidence="7">
    <location>
        <begin position="831"/>
        <end position="835"/>
    </location>
</feature>
<feature type="strand" evidence="7">
    <location>
        <begin position="848"/>
        <end position="855"/>
    </location>
</feature>
<feature type="helix" evidence="7">
    <location>
        <begin position="860"/>
        <end position="862"/>
    </location>
</feature>
<feature type="strand" evidence="7">
    <location>
        <begin position="864"/>
        <end position="867"/>
    </location>
</feature>
<feature type="strand" evidence="7">
    <location>
        <begin position="874"/>
        <end position="877"/>
    </location>
</feature>
<feature type="strand" evidence="7">
    <location>
        <begin position="885"/>
        <end position="894"/>
    </location>
</feature>
<feature type="strand" evidence="7">
    <location>
        <begin position="905"/>
        <end position="908"/>
    </location>
</feature>
<evidence type="ECO:0000250" key="1"/>
<evidence type="ECO:0000255" key="2"/>
<evidence type="ECO:0000255" key="3">
    <source>
        <dbReference type="PROSITE-ProRule" id="PRU00114"/>
    </source>
</evidence>
<evidence type="ECO:0000255" key="4">
    <source>
        <dbReference type="PROSITE-ProRule" id="PRU00316"/>
    </source>
</evidence>
<evidence type="ECO:0000256" key="5">
    <source>
        <dbReference type="SAM" id="MobiDB-lite"/>
    </source>
</evidence>
<evidence type="ECO:0000305" key="6"/>
<evidence type="ECO:0007829" key="7">
    <source>
        <dbReference type="PDB" id="5E7L"/>
    </source>
</evidence>
<evidence type="ECO:0007829" key="8">
    <source>
        <dbReference type="PDB" id="8A0Y"/>
    </source>
</evidence>
<reference key="1">
    <citation type="journal article" date="2004" name="Genome Res.">
        <title>The status, quality, and expansion of the NIH full-length cDNA project: the Mammalian Gene Collection (MGC).</title>
        <authorList>
            <consortium name="The MGC Project Team"/>
        </authorList>
    </citation>
    <scope>NUCLEOTIDE SEQUENCE [LARGE SCALE MRNA]</scope>
    <source>
        <strain>C57BL/6J</strain>
        <tissue>Brain</tissue>
    </source>
</reference>
<reference key="2">
    <citation type="submission" date="1994-09" db="EMBL/GenBank/DDBJ databases">
        <authorList>
            <person name="Wolfer D."/>
            <person name="Giger R.J."/>
        </authorList>
    </citation>
    <scope>NUCLEOTIDE SEQUENCE [MRNA] OF 664-881</scope>
    <source>
        <strain>ICR</strain>
        <tissue>Embryo</tissue>
    </source>
</reference>
<reference key="3">
    <citation type="journal article" date="2006" name="Mol. Cell. Proteomics">
        <title>Comprehensive identification of phosphorylation sites in postsynaptic density preparations.</title>
        <authorList>
            <person name="Trinidad J.C."/>
            <person name="Specht C.G."/>
            <person name="Thalhammer A."/>
            <person name="Schoepfer R."/>
            <person name="Burlingame A.L."/>
        </authorList>
    </citation>
    <scope>IDENTIFICATION BY MASS SPECTROMETRY [LARGE SCALE ANALYSIS]</scope>
    <source>
        <tissue>Brain</tissue>
    </source>
</reference>
<reference key="4">
    <citation type="journal article" date="2010" name="Cell">
        <title>A tissue-specific atlas of mouse protein phosphorylation and expression.</title>
        <authorList>
            <person name="Huttlin E.L."/>
            <person name="Jedrychowski M.P."/>
            <person name="Elias J.E."/>
            <person name="Goswami T."/>
            <person name="Rad R."/>
            <person name="Beausoleil S.A."/>
            <person name="Villen J."/>
            <person name="Haas W."/>
            <person name="Sowa M.E."/>
            <person name="Gygi S.P."/>
        </authorList>
    </citation>
    <scope>IDENTIFICATION BY MASS SPECTROMETRY [LARGE SCALE ANALYSIS]</scope>
    <source>
        <tissue>Brain</tissue>
    </source>
</reference>
<gene>
    <name type="primary">Cntn2</name>
    <name type="synonym">Tax</name>
</gene>
<organism>
    <name type="scientific">Mus musculus</name>
    <name type="common">Mouse</name>
    <dbReference type="NCBI Taxonomy" id="10090"/>
    <lineage>
        <taxon>Eukaryota</taxon>
        <taxon>Metazoa</taxon>
        <taxon>Chordata</taxon>
        <taxon>Craniata</taxon>
        <taxon>Vertebrata</taxon>
        <taxon>Euteleostomi</taxon>
        <taxon>Mammalia</taxon>
        <taxon>Eutheria</taxon>
        <taxon>Euarchontoglires</taxon>
        <taxon>Glires</taxon>
        <taxon>Rodentia</taxon>
        <taxon>Myomorpha</taxon>
        <taxon>Muroidea</taxon>
        <taxon>Muridae</taxon>
        <taxon>Murinae</taxon>
        <taxon>Mus</taxon>
        <taxon>Mus</taxon>
    </lineage>
</organism>
<sequence length="1040" mass="113217">MGAPARKRASLLLLLLATMALVSSPGWSFSQGTPATFGPVFEEQPVGLLFPEESAEDQVTLACRARASPPATYRWKMNGTEMNLEPGSRHQLMGGNLVIMSPTKAQDAGVYQCLASNPVGTVVSKEAVLRFGFLQEFSKEERDPVKTHEGWGVMLPCNPPAHYPGLSYRWLLNEFPNFIPTDGRHFVSQTTGNLYIARTNASDLGNYSCLATSHLDFSTKSVFSKFAQLNLAAEDPRLFAPSIKARFPPETYALVGQQVTLECFAFGNPVPRIKWRKVDGSLSPQWGTAEPTLQIPSVSFEDEGTYECEAENSKGRDTVQGRIIVQAQPEWLKVISDTEADIGSNLRWGCAAAGKPRPMVRWLRNGEPLASQNRVEVLAGDLRFSKLNLEDSGMYQCVAENKHGTIYASAELAVQALAPDFRQNPVRRLIPAARGGEISIPCQPRAAPKATILWSKGTEILGNSTRVTVTLDGTLIIRNISRSDEGKYTCFAENFMGKANSTGILSVRDATKITLAPSSADINVGDNLTLQCHASHDPTMDLTFTWTLDDFPVDFDKPGGHYRRASVKETIGDLTILNAQLRHGGTYTCMAQTVVDGASKEATVLVRGPPGPPGGVVVRDIGDTTVQLSWSRGFDNHSPIAKYTLQARTPPSGKWKQVRTNPVNIEGNAETAQVLGLMPWMDYEFRVSASNILGTGEPSGPSSRIRTKEAVPSVAPSGLSGGGGAPGELTINWTPMSREYQNGDGFGYLLSFRRQGSSSWQTARVPGADTQYFVYSNDSIHPYTPFEVKIRSYNRRGDGPESLTAIVYSAEEEPKVAPAKVWAKGSSSSEMNVSWEPVLQDMNGILLGYEIRYWKAGDKEAAADRVRTAGLDSSARVTGLYPNTKYHVTVRAYNRAGTGPASPSADAMTMKPPPRRPPGNISWTFSSSSLSLKWDPVVPLRNESTVTGYKMLYQNDLQPTPMLHLTSKNWIEIPVPEDIGHALVQIRTTGPGGDGIPAEVHIVRNGGTSMMVESSAVRPAHPGPVFSCMVILMLAGCQRL</sequence>
<dbReference type="EMBL" id="BC066106">
    <property type="protein sequence ID" value="AAH66106.1"/>
    <property type="molecule type" value="mRNA"/>
</dbReference>
<dbReference type="EMBL" id="BC053033">
    <property type="protein sequence ID" value="AAH53033.1"/>
    <property type="molecule type" value="mRNA"/>
</dbReference>
<dbReference type="EMBL" id="X81365">
    <property type="protein sequence ID" value="CAA57130.1"/>
    <property type="molecule type" value="mRNA"/>
</dbReference>
<dbReference type="CCDS" id="CCDS15288.1"/>
<dbReference type="RefSeq" id="NP_796103.2">
    <property type="nucleotide sequence ID" value="NM_177129.5"/>
</dbReference>
<dbReference type="RefSeq" id="XP_006529425.1">
    <property type="nucleotide sequence ID" value="XM_006529362.2"/>
</dbReference>
<dbReference type="PDB" id="5E7L">
    <property type="method" value="X-ray"/>
    <property type="resolution" value="2.00 A"/>
    <property type="chains" value="A=609-911"/>
</dbReference>
<dbReference type="PDB" id="8A0Y">
    <property type="method" value="X-ray"/>
    <property type="resolution" value="3.50 A"/>
    <property type="chains" value="A/B/C=28-608"/>
</dbReference>
<dbReference type="PDBsum" id="5E7L"/>
<dbReference type="PDBsum" id="8A0Y"/>
<dbReference type="SASBDB" id="Q61330"/>
<dbReference type="SMR" id="Q61330"/>
<dbReference type="BioGRID" id="203974">
    <property type="interactions" value="12"/>
</dbReference>
<dbReference type="FunCoup" id="Q61330">
    <property type="interactions" value="645"/>
</dbReference>
<dbReference type="IntAct" id="Q61330">
    <property type="interactions" value="2"/>
</dbReference>
<dbReference type="MINT" id="Q61330"/>
<dbReference type="STRING" id="10090.ENSMUSP00000083707"/>
<dbReference type="GlyConnect" id="2225">
    <property type="glycosylation" value="6 N-Linked glycans (4 sites)"/>
</dbReference>
<dbReference type="GlyCosmos" id="Q61330">
    <property type="glycosylation" value="11 sites, 5 glycans"/>
</dbReference>
<dbReference type="GlyGen" id="Q61330">
    <property type="glycosylation" value="14 sites, 12 N-linked glycans (8 sites), 1 O-linked glycan (1 site)"/>
</dbReference>
<dbReference type="iPTMnet" id="Q61330"/>
<dbReference type="PhosphoSitePlus" id="Q61330"/>
<dbReference type="SwissPalm" id="Q61330"/>
<dbReference type="PaxDb" id="10090-ENSMUSP00000083707"/>
<dbReference type="PeptideAtlas" id="Q61330"/>
<dbReference type="ProteomicsDB" id="283585"/>
<dbReference type="Antibodypedia" id="670">
    <property type="antibodies" value="273 antibodies from 32 providers"/>
</dbReference>
<dbReference type="Ensembl" id="ENSMUST00000086521.11">
    <property type="protein sequence ID" value="ENSMUSP00000083707.5"/>
    <property type="gene ID" value="ENSMUSG00000053024.15"/>
</dbReference>
<dbReference type="GeneID" id="21367"/>
<dbReference type="KEGG" id="mmu:21367"/>
<dbReference type="UCSC" id="uc007cpa.1">
    <property type="organism name" value="mouse"/>
</dbReference>
<dbReference type="AGR" id="MGI:104518"/>
<dbReference type="CTD" id="6900"/>
<dbReference type="MGI" id="MGI:104518">
    <property type="gene designation" value="Cntn2"/>
</dbReference>
<dbReference type="VEuPathDB" id="HostDB:ENSMUSG00000053024"/>
<dbReference type="eggNOG" id="KOG3513">
    <property type="taxonomic scope" value="Eukaryota"/>
</dbReference>
<dbReference type="GeneTree" id="ENSGT00940000159193"/>
<dbReference type="HOGENOM" id="CLU_005756_0_0_1"/>
<dbReference type="InParanoid" id="Q61330"/>
<dbReference type="OMA" id="MPDANPR"/>
<dbReference type="OrthoDB" id="6418794at2759"/>
<dbReference type="PhylomeDB" id="Q61330"/>
<dbReference type="TreeFam" id="TF351103"/>
<dbReference type="BioGRID-ORCS" id="21367">
    <property type="hits" value="2 hits in 78 CRISPR screens"/>
</dbReference>
<dbReference type="CD-CODE" id="CE726F99">
    <property type="entry name" value="Postsynaptic density"/>
</dbReference>
<dbReference type="ChiTaRS" id="Cntn2">
    <property type="organism name" value="mouse"/>
</dbReference>
<dbReference type="PRO" id="PR:Q61330"/>
<dbReference type="Proteomes" id="UP000000589">
    <property type="component" value="Chromosome 1"/>
</dbReference>
<dbReference type="RNAct" id="Q61330">
    <property type="molecule type" value="protein"/>
</dbReference>
<dbReference type="Bgee" id="ENSMUSG00000053024">
    <property type="expression patterns" value="Expressed in cortical plate and 109 other cell types or tissues"/>
</dbReference>
<dbReference type="ExpressionAtlas" id="Q61330">
    <property type="expression patterns" value="baseline and differential"/>
</dbReference>
<dbReference type="GO" id="GO:0030424">
    <property type="term" value="C:axon"/>
    <property type="evidence" value="ECO:0000314"/>
    <property type="project" value="MGI"/>
</dbReference>
<dbReference type="GO" id="GO:0043194">
    <property type="term" value="C:axon initial segment"/>
    <property type="evidence" value="ECO:0000314"/>
    <property type="project" value="MGI"/>
</dbReference>
<dbReference type="GO" id="GO:0009986">
    <property type="term" value="C:cell surface"/>
    <property type="evidence" value="ECO:0000314"/>
    <property type="project" value="MGI"/>
</dbReference>
<dbReference type="GO" id="GO:0044224">
    <property type="term" value="C:juxtaparanode region of axon"/>
    <property type="evidence" value="ECO:0000314"/>
    <property type="project" value="BHF-UCL"/>
</dbReference>
<dbReference type="GO" id="GO:0043209">
    <property type="term" value="C:myelin sheath"/>
    <property type="evidence" value="ECO:0000314"/>
    <property type="project" value="BHF-UCL"/>
</dbReference>
<dbReference type="GO" id="GO:0043005">
    <property type="term" value="C:neuron projection"/>
    <property type="evidence" value="ECO:0000314"/>
    <property type="project" value="MGI"/>
</dbReference>
<dbReference type="GO" id="GO:0043025">
    <property type="term" value="C:neuronal cell body"/>
    <property type="evidence" value="ECO:0000314"/>
    <property type="project" value="MGI"/>
</dbReference>
<dbReference type="GO" id="GO:0033268">
    <property type="term" value="C:node of Ranvier"/>
    <property type="evidence" value="ECO:0000314"/>
    <property type="project" value="BHF-UCL"/>
</dbReference>
<dbReference type="GO" id="GO:0045211">
    <property type="term" value="C:postsynaptic membrane"/>
    <property type="evidence" value="ECO:0007669"/>
    <property type="project" value="Ensembl"/>
</dbReference>
<dbReference type="GO" id="GO:0098552">
    <property type="term" value="C:side of membrane"/>
    <property type="evidence" value="ECO:0007669"/>
    <property type="project" value="UniProtKB-KW"/>
</dbReference>
<dbReference type="GO" id="GO:0030246">
    <property type="term" value="F:carbohydrate binding"/>
    <property type="evidence" value="ECO:0000314"/>
    <property type="project" value="MGI"/>
</dbReference>
<dbReference type="GO" id="GO:0098631">
    <property type="term" value="F:cell adhesion mediator activity"/>
    <property type="evidence" value="ECO:0000315"/>
    <property type="project" value="MGI"/>
</dbReference>
<dbReference type="GO" id="GO:0007628">
    <property type="term" value="P:adult walking behavior"/>
    <property type="evidence" value="ECO:0000315"/>
    <property type="project" value="MGI"/>
</dbReference>
<dbReference type="GO" id="GO:0007411">
    <property type="term" value="P:axon guidance"/>
    <property type="evidence" value="ECO:0000315"/>
    <property type="project" value="MGI"/>
</dbReference>
<dbReference type="GO" id="GO:0007413">
    <property type="term" value="P:axonal fasciculation"/>
    <property type="evidence" value="ECO:0000315"/>
    <property type="project" value="MGI"/>
</dbReference>
<dbReference type="GO" id="GO:0022010">
    <property type="term" value="P:central nervous system myelination"/>
    <property type="evidence" value="ECO:0000315"/>
    <property type="project" value="MGI"/>
</dbReference>
<dbReference type="GO" id="GO:0021953">
    <property type="term" value="P:central nervous system neuron differentiation"/>
    <property type="evidence" value="ECO:0000316"/>
    <property type="project" value="MGI"/>
</dbReference>
<dbReference type="GO" id="GO:0021853">
    <property type="term" value="P:cerebral cortex GABAergic interneuron migration"/>
    <property type="evidence" value="ECO:0000315"/>
    <property type="project" value="MGI"/>
</dbReference>
<dbReference type="GO" id="GO:0045163">
    <property type="term" value="P:clustering of voltage-gated potassium channels"/>
    <property type="evidence" value="ECO:0000315"/>
    <property type="project" value="BHF-UCL"/>
</dbReference>
<dbReference type="GO" id="GO:0051649">
    <property type="term" value="P:establishment of localization in cell"/>
    <property type="evidence" value="ECO:0000314"/>
    <property type="project" value="MGI"/>
</dbReference>
<dbReference type="GO" id="GO:0071206">
    <property type="term" value="P:establishment of protein localization to juxtaparanode region of axon"/>
    <property type="evidence" value="ECO:0000314"/>
    <property type="project" value="BHF-UCL"/>
</dbReference>
<dbReference type="GO" id="GO:0045444">
    <property type="term" value="P:fat cell differentiation"/>
    <property type="evidence" value="ECO:0000315"/>
    <property type="project" value="MGI"/>
</dbReference>
<dbReference type="GO" id="GO:0001973">
    <property type="term" value="P:G protein-coupled adenosine receptor signaling pathway"/>
    <property type="evidence" value="ECO:0000315"/>
    <property type="project" value="MGI"/>
</dbReference>
<dbReference type="GO" id="GO:0007612">
    <property type="term" value="P:learning"/>
    <property type="evidence" value="ECO:0000315"/>
    <property type="project" value="MGI"/>
</dbReference>
<dbReference type="GO" id="GO:0000226">
    <property type="term" value="P:microtubule cytoskeleton organization"/>
    <property type="evidence" value="ECO:0000315"/>
    <property type="project" value="MGI"/>
</dbReference>
<dbReference type="GO" id="GO:0045665">
    <property type="term" value="P:negative regulation of neuron differentiation"/>
    <property type="evidence" value="ECO:0000316"/>
    <property type="project" value="MGI"/>
</dbReference>
<dbReference type="GO" id="GO:0001764">
    <property type="term" value="P:neuron migration"/>
    <property type="evidence" value="ECO:0000315"/>
    <property type="project" value="MGI"/>
</dbReference>
<dbReference type="GO" id="GO:0031175">
    <property type="term" value="P:neuron projection development"/>
    <property type="evidence" value="ECO:0000316"/>
    <property type="project" value="MGI"/>
</dbReference>
<dbReference type="GO" id="GO:0060168">
    <property type="term" value="P:positive regulation of adenosine receptor signaling pathway"/>
    <property type="evidence" value="ECO:0000315"/>
    <property type="project" value="MGI"/>
</dbReference>
<dbReference type="GO" id="GO:0010954">
    <property type="term" value="P:positive regulation of protein processing"/>
    <property type="evidence" value="ECO:0000314"/>
    <property type="project" value="MGI"/>
</dbReference>
<dbReference type="GO" id="GO:0097090">
    <property type="term" value="P:presynaptic membrane organization"/>
    <property type="evidence" value="ECO:0000250"/>
    <property type="project" value="UniProtKB"/>
</dbReference>
<dbReference type="GO" id="GO:0071205">
    <property type="term" value="P:protein localization to juxtaparanode region of axon"/>
    <property type="evidence" value="ECO:0000315"/>
    <property type="project" value="BHF-UCL"/>
</dbReference>
<dbReference type="GO" id="GO:0016485">
    <property type="term" value="P:protein processing"/>
    <property type="evidence" value="ECO:0000314"/>
    <property type="project" value="MGI"/>
</dbReference>
<dbReference type="GO" id="GO:0031623">
    <property type="term" value="P:receptor internalization"/>
    <property type="evidence" value="ECO:0000314"/>
    <property type="project" value="MGI"/>
</dbReference>
<dbReference type="GO" id="GO:0002023">
    <property type="term" value="P:reduction of food intake in response to dietary excess"/>
    <property type="evidence" value="ECO:0000315"/>
    <property type="project" value="MGI"/>
</dbReference>
<dbReference type="GO" id="GO:0048710">
    <property type="term" value="P:regulation of astrocyte differentiation"/>
    <property type="evidence" value="ECO:0000315"/>
    <property type="project" value="MGI"/>
</dbReference>
<dbReference type="GO" id="GO:0031133">
    <property type="term" value="P:regulation of axon diameter"/>
    <property type="evidence" value="ECO:0000315"/>
    <property type="project" value="MGI"/>
</dbReference>
<dbReference type="GO" id="GO:0022604">
    <property type="term" value="P:regulation of cell morphogenesis"/>
    <property type="evidence" value="ECO:0000315"/>
    <property type="project" value="MGI"/>
</dbReference>
<dbReference type="GO" id="GO:0048168">
    <property type="term" value="P:regulation of neuronal synaptic plasticity"/>
    <property type="evidence" value="ECO:0000315"/>
    <property type="project" value="MGI"/>
</dbReference>
<dbReference type="GO" id="GO:0002021">
    <property type="term" value="P:response to dietary excess"/>
    <property type="evidence" value="ECO:0000315"/>
    <property type="project" value="MGI"/>
</dbReference>
<dbReference type="CDD" id="cd00063">
    <property type="entry name" value="FN3"/>
    <property type="match status" value="3"/>
</dbReference>
<dbReference type="CDD" id="cd05727">
    <property type="entry name" value="Ig2_Contactin-2-like"/>
    <property type="match status" value="1"/>
</dbReference>
<dbReference type="CDD" id="cd05728">
    <property type="entry name" value="Ig4_Contactin-2-like"/>
    <property type="match status" value="1"/>
</dbReference>
<dbReference type="CDD" id="cd04969">
    <property type="entry name" value="Ig5_Contactin"/>
    <property type="match status" value="1"/>
</dbReference>
<dbReference type="FunFam" id="2.60.40.10:FF:000035">
    <property type="entry name" value="Contactin 1"/>
    <property type="match status" value="1"/>
</dbReference>
<dbReference type="FunFam" id="2.60.40.10:FF:000044">
    <property type="entry name" value="Contactin 1"/>
    <property type="match status" value="1"/>
</dbReference>
<dbReference type="FunFam" id="2.60.40.10:FF:000047">
    <property type="entry name" value="Contactin 1"/>
    <property type="match status" value="1"/>
</dbReference>
<dbReference type="FunFam" id="2.60.40.10:FF:000052">
    <property type="entry name" value="Contactin 1"/>
    <property type="match status" value="1"/>
</dbReference>
<dbReference type="FunFam" id="2.60.40.10:FF:000054">
    <property type="entry name" value="Contactin 1"/>
    <property type="match status" value="1"/>
</dbReference>
<dbReference type="FunFam" id="2.60.40.10:FF:000064">
    <property type="entry name" value="Contactin 1"/>
    <property type="match status" value="1"/>
</dbReference>
<dbReference type="FunFam" id="2.60.40.10:FF:000600">
    <property type="entry name" value="Contactin 2"/>
    <property type="match status" value="1"/>
</dbReference>
<dbReference type="FunFam" id="2.60.40.10:FF:000004">
    <property type="entry name" value="DCC isoform 1"/>
    <property type="match status" value="1"/>
</dbReference>
<dbReference type="FunFam" id="2.60.40.10:FF:000005">
    <property type="entry name" value="Neuronal cell adhesion molecule"/>
    <property type="match status" value="1"/>
</dbReference>
<dbReference type="FunFam" id="2.60.40.10:FF:000028">
    <property type="entry name" value="Neuronal cell adhesion molecule"/>
    <property type="match status" value="1"/>
</dbReference>
<dbReference type="Gene3D" id="2.60.40.10">
    <property type="entry name" value="Immunoglobulins"/>
    <property type="match status" value="10"/>
</dbReference>
<dbReference type="InterPro" id="IPR047102">
    <property type="entry name" value="Contactin-1_2_Ig1"/>
</dbReference>
<dbReference type="InterPro" id="IPR003961">
    <property type="entry name" value="FN3_dom"/>
</dbReference>
<dbReference type="InterPro" id="IPR036116">
    <property type="entry name" value="FN3_sf"/>
</dbReference>
<dbReference type="InterPro" id="IPR007110">
    <property type="entry name" value="Ig-like_dom"/>
</dbReference>
<dbReference type="InterPro" id="IPR036179">
    <property type="entry name" value="Ig-like_dom_sf"/>
</dbReference>
<dbReference type="InterPro" id="IPR013783">
    <property type="entry name" value="Ig-like_fold"/>
</dbReference>
<dbReference type="InterPro" id="IPR013098">
    <property type="entry name" value="Ig_I-set"/>
</dbReference>
<dbReference type="InterPro" id="IPR003599">
    <property type="entry name" value="Ig_sub"/>
</dbReference>
<dbReference type="InterPro" id="IPR003598">
    <property type="entry name" value="Ig_sub2"/>
</dbReference>
<dbReference type="PANTHER" id="PTHR44170:SF28">
    <property type="entry name" value="CONTACTIN-2"/>
    <property type="match status" value="1"/>
</dbReference>
<dbReference type="PANTHER" id="PTHR44170">
    <property type="entry name" value="PROTEIN SIDEKICK"/>
    <property type="match status" value="1"/>
</dbReference>
<dbReference type="Pfam" id="PF00041">
    <property type="entry name" value="fn3"/>
    <property type="match status" value="2"/>
</dbReference>
<dbReference type="Pfam" id="PF07679">
    <property type="entry name" value="I-set"/>
    <property type="match status" value="2"/>
</dbReference>
<dbReference type="Pfam" id="PF13927">
    <property type="entry name" value="Ig_3"/>
    <property type="match status" value="3"/>
</dbReference>
<dbReference type="SMART" id="SM00060">
    <property type="entry name" value="FN3"/>
    <property type="match status" value="4"/>
</dbReference>
<dbReference type="SMART" id="SM00409">
    <property type="entry name" value="IG"/>
    <property type="match status" value="6"/>
</dbReference>
<dbReference type="SMART" id="SM00408">
    <property type="entry name" value="IGc2"/>
    <property type="match status" value="5"/>
</dbReference>
<dbReference type="SUPFAM" id="SSF49265">
    <property type="entry name" value="Fibronectin type III"/>
    <property type="match status" value="2"/>
</dbReference>
<dbReference type="SUPFAM" id="SSF48726">
    <property type="entry name" value="Immunoglobulin"/>
    <property type="match status" value="6"/>
</dbReference>
<dbReference type="PROSITE" id="PS50853">
    <property type="entry name" value="FN3"/>
    <property type="match status" value="4"/>
</dbReference>
<dbReference type="PROSITE" id="PS50835">
    <property type="entry name" value="IG_LIKE"/>
    <property type="match status" value="6"/>
</dbReference>
<protein>
    <recommendedName>
        <fullName>Contactin-2</fullName>
    </recommendedName>
    <alternativeName>
        <fullName>Axonal glycoprotein TAG-1</fullName>
    </alternativeName>
    <alternativeName>
        <fullName>Axonin-1</fullName>
    </alternativeName>
    <alternativeName>
        <fullName>Transient axonal glycoprotein 1</fullName>
        <shortName>TAX-1</shortName>
    </alternativeName>
</protein>
<keyword id="KW-0002">3D-structure</keyword>
<keyword id="KW-0130">Cell adhesion</keyword>
<keyword id="KW-1003">Cell membrane</keyword>
<keyword id="KW-1015">Disulfide bond</keyword>
<keyword id="KW-0325">Glycoprotein</keyword>
<keyword id="KW-0336">GPI-anchor</keyword>
<keyword id="KW-0393">Immunoglobulin domain</keyword>
<keyword id="KW-0449">Lipoprotein</keyword>
<keyword id="KW-0472">Membrane</keyword>
<keyword id="KW-1185">Reference proteome</keyword>
<keyword id="KW-0677">Repeat</keyword>
<keyword id="KW-0732">Signal</keyword>
<proteinExistence type="evidence at protein level"/>
<comment type="function">
    <text evidence="1">In conjunction with another transmembrane protein, CNTNAP2, contributes to the organization of axonal domains at nodes of Ranvier by maintaining voltage-gated potassium channels at the juxtaparanodal region.</text>
</comment>
<comment type="subcellular location">
    <subcellularLocation>
        <location evidence="1">Cell membrane</location>
        <topology evidence="1">Lipid-anchor</topology>
        <topology evidence="1">GPI-anchor</topology>
    </subcellularLocation>
    <text evidence="1">Attached to the neuronal membrane by a GPI-anchor and is also released from neurons.</text>
</comment>
<comment type="similarity">
    <text evidence="6">Belongs to the immunoglobulin superfamily. Contactin family.</text>
</comment>